<protein>
    <recommendedName>
        <fullName evidence="1">Large ribosomal subunit protein uL16</fullName>
    </recommendedName>
    <alternativeName>
        <fullName evidence="3">50S ribosomal protein L16</fullName>
    </alternativeName>
</protein>
<reference key="1">
    <citation type="journal article" date="2007" name="Nat. Biotechnol.">
        <title>Genome sequence and identification of candidate vaccine antigens from the animal pathogen Dichelobacter nodosus.</title>
        <authorList>
            <person name="Myers G.S.A."/>
            <person name="Parker D."/>
            <person name="Al-Hasani K."/>
            <person name="Kennan R.M."/>
            <person name="Seemann T."/>
            <person name="Ren Q."/>
            <person name="Badger J.H."/>
            <person name="Selengut J.D."/>
            <person name="Deboy R.T."/>
            <person name="Tettelin H."/>
            <person name="Boyce J.D."/>
            <person name="McCarl V.P."/>
            <person name="Han X."/>
            <person name="Nelson W.C."/>
            <person name="Madupu R."/>
            <person name="Mohamoud Y."/>
            <person name="Holley T."/>
            <person name="Fedorova N."/>
            <person name="Khouri H."/>
            <person name="Bottomley S.P."/>
            <person name="Whittington R.J."/>
            <person name="Adler B."/>
            <person name="Songer J.G."/>
            <person name="Rood J.I."/>
            <person name="Paulsen I.T."/>
        </authorList>
    </citation>
    <scope>NUCLEOTIDE SEQUENCE [LARGE SCALE GENOMIC DNA]</scope>
    <source>
        <strain>VCS1703A</strain>
    </source>
</reference>
<sequence length="137" mass="15571">MLQPKRTKFRKQQKGRNRGLAQSGNTVSFGDYGLKATTRGRLTARQIEAARRAINRHVKRGGKVWIRVFPDVPVTNKPLEVRQGKGKGNVEYWVAKVQPGTVLYEMEGVTEELAREAFRLAAAKLPVQTTFEYRKVM</sequence>
<evidence type="ECO:0000255" key="1">
    <source>
        <dbReference type="HAMAP-Rule" id="MF_01342"/>
    </source>
</evidence>
<evidence type="ECO:0000256" key="2">
    <source>
        <dbReference type="SAM" id="MobiDB-lite"/>
    </source>
</evidence>
<evidence type="ECO:0000305" key="3"/>
<comment type="function">
    <text evidence="1">Binds 23S rRNA and is also seen to make contacts with the A and possibly P site tRNAs.</text>
</comment>
<comment type="subunit">
    <text evidence="1">Part of the 50S ribosomal subunit.</text>
</comment>
<comment type="similarity">
    <text evidence="1">Belongs to the universal ribosomal protein uL16 family.</text>
</comment>
<feature type="chain" id="PRO_1000054616" description="Large ribosomal subunit protein uL16">
    <location>
        <begin position="1"/>
        <end position="137"/>
    </location>
</feature>
<feature type="region of interest" description="Disordered" evidence="2">
    <location>
        <begin position="1"/>
        <end position="24"/>
    </location>
</feature>
<feature type="compositionally biased region" description="Basic residues" evidence="2">
    <location>
        <begin position="1"/>
        <end position="17"/>
    </location>
</feature>
<gene>
    <name evidence="1" type="primary">rplP</name>
    <name type="ordered locus">DNO_1268</name>
</gene>
<organism>
    <name type="scientific">Dichelobacter nodosus (strain VCS1703A)</name>
    <dbReference type="NCBI Taxonomy" id="246195"/>
    <lineage>
        <taxon>Bacteria</taxon>
        <taxon>Pseudomonadati</taxon>
        <taxon>Pseudomonadota</taxon>
        <taxon>Gammaproteobacteria</taxon>
        <taxon>Cardiobacteriales</taxon>
        <taxon>Cardiobacteriaceae</taxon>
        <taxon>Dichelobacter</taxon>
    </lineage>
</organism>
<name>RL16_DICNV</name>
<dbReference type="EMBL" id="CP000513">
    <property type="protein sequence ID" value="ABQ13949.1"/>
    <property type="molecule type" value="Genomic_DNA"/>
</dbReference>
<dbReference type="RefSeq" id="WP_012031563.1">
    <property type="nucleotide sequence ID" value="NC_009446.1"/>
</dbReference>
<dbReference type="SMR" id="A5EX92"/>
<dbReference type="STRING" id="246195.DNO_1268"/>
<dbReference type="KEGG" id="dno:DNO_1268"/>
<dbReference type="eggNOG" id="COG0197">
    <property type="taxonomic scope" value="Bacteria"/>
</dbReference>
<dbReference type="HOGENOM" id="CLU_078858_2_1_6"/>
<dbReference type="OrthoDB" id="9802589at2"/>
<dbReference type="Proteomes" id="UP000000248">
    <property type="component" value="Chromosome"/>
</dbReference>
<dbReference type="GO" id="GO:0022625">
    <property type="term" value="C:cytosolic large ribosomal subunit"/>
    <property type="evidence" value="ECO:0007669"/>
    <property type="project" value="TreeGrafter"/>
</dbReference>
<dbReference type="GO" id="GO:0019843">
    <property type="term" value="F:rRNA binding"/>
    <property type="evidence" value="ECO:0007669"/>
    <property type="project" value="UniProtKB-UniRule"/>
</dbReference>
<dbReference type="GO" id="GO:0003735">
    <property type="term" value="F:structural constituent of ribosome"/>
    <property type="evidence" value="ECO:0007669"/>
    <property type="project" value="InterPro"/>
</dbReference>
<dbReference type="GO" id="GO:0000049">
    <property type="term" value="F:tRNA binding"/>
    <property type="evidence" value="ECO:0007669"/>
    <property type="project" value="UniProtKB-KW"/>
</dbReference>
<dbReference type="GO" id="GO:0006412">
    <property type="term" value="P:translation"/>
    <property type="evidence" value="ECO:0007669"/>
    <property type="project" value="UniProtKB-UniRule"/>
</dbReference>
<dbReference type="CDD" id="cd01433">
    <property type="entry name" value="Ribosomal_L16_L10e"/>
    <property type="match status" value="1"/>
</dbReference>
<dbReference type="FunFam" id="3.90.1170.10:FF:000001">
    <property type="entry name" value="50S ribosomal protein L16"/>
    <property type="match status" value="1"/>
</dbReference>
<dbReference type="Gene3D" id="3.90.1170.10">
    <property type="entry name" value="Ribosomal protein L10e/L16"/>
    <property type="match status" value="1"/>
</dbReference>
<dbReference type="HAMAP" id="MF_01342">
    <property type="entry name" value="Ribosomal_uL16"/>
    <property type="match status" value="1"/>
</dbReference>
<dbReference type="InterPro" id="IPR047873">
    <property type="entry name" value="Ribosomal_uL16"/>
</dbReference>
<dbReference type="InterPro" id="IPR000114">
    <property type="entry name" value="Ribosomal_uL16_bact-type"/>
</dbReference>
<dbReference type="InterPro" id="IPR020798">
    <property type="entry name" value="Ribosomal_uL16_CS"/>
</dbReference>
<dbReference type="InterPro" id="IPR016180">
    <property type="entry name" value="Ribosomal_uL16_dom"/>
</dbReference>
<dbReference type="InterPro" id="IPR036920">
    <property type="entry name" value="Ribosomal_uL16_sf"/>
</dbReference>
<dbReference type="NCBIfam" id="TIGR01164">
    <property type="entry name" value="rplP_bact"/>
    <property type="match status" value="1"/>
</dbReference>
<dbReference type="PANTHER" id="PTHR12220">
    <property type="entry name" value="50S/60S RIBOSOMAL PROTEIN L16"/>
    <property type="match status" value="1"/>
</dbReference>
<dbReference type="PANTHER" id="PTHR12220:SF13">
    <property type="entry name" value="LARGE RIBOSOMAL SUBUNIT PROTEIN UL16M"/>
    <property type="match status" value="1"/>
</dbReference>
<dbReference type="Pfam" id="PF00252">
    <property type="entry name" value="Ribosomal_L16"/>
    <property type="match status" value="1"/>
</dbReference>
<dbReference type="PRINTS" id="PR00060">
    <property type="entry name" value="RIBOSOMALL16"/>
</dbReference>
<dbReference type="SUPFAM" id="SSF54686">
    <property type="entry name" value="Ribosomal protein L16p/L10e"/>
    <property type="match status" value="1"/>
</dbReference>
<dbReference type="PROSITE" id="PS00586">
    <property type="entry name" value="RIBOSOMAL_L16_1"/>
    <property type="match status" value="1"/>
</dbReference>
<keyword id="KW-1185">Reference proteome</keyword>
<keyword id="KW-0687">Ribonucleoprotein</keyword>
<keyword id="KW-0689">Ribosomal protein</keyword>
<keyword id="KW-0694">RNA-binding</keyword>
<keyword id="KW-0699">rRNA-binding</keyword>
<keyword id="KW-0820">tRNA-binding</keyword>
<accession>A5EX92</accession>
<proteinExistence type="inferred from homology"/>